<sequence>MAGNTIGQLFRVTTFGESHGLALGCIVDGVPPGIPLTEADLQHDLDRRRPGTSRYTTQRREPDQVKILSGVFEGVTTGTSIGLLIENTDQRSQDYSAIKDVFRPGHADYTYEQKYGLRDYRGGGRSSARETAMRVAAGAIAKKYLAEKFGIEIRGCLTQMGDIPLEIKDWSLVEQNPFFCPDPDKIDALDELMRALKKEGDSIGAKVTVVASGVPAGLGEPVFDRLDADIAHALMSINAVKGVEIGDGFDVVALRGSQNRDEITKDGFQSNHAGGILGGISSGQQIIAHMALKPTSSITVPGRTINRFGEEVEMITKGRHDPCVGIRAVPIAEAMLAIVLMDHLLRQRAQNADVKTDIPRW</sequence>
<comment type="function">
    <text evidence="1">Catalyzes the anti-1,4-elimination of the C-3 phosphate and the C-6 proR hydrogen from 5-enolpyruvylshikimate-3-phosphate (EPSP) to yield chorismate, which is the branch point compound that serves as the starting substrate for the three terminal pathways of aromatic amino acid biosynthesis. This reaction introduces a second double bond into the aromatic ring system.</text>
</comment>
<comment type="catalytic activity">
    <reaction evidence="1">
        <text>5-O-(1-carboxyvinyl)-3-phosphoshikimate = chorismate + phosphate</text>
        <dbReference type="Rhea" id="RHEA:21020"/>
        <dbReference type="ChEBI" id="CHEBI:29748"/>
        <dbReference type="ChEBI" id="CHEBI:43474"/>
        <dbReference type="ChEBI" id="CHEBI:57701"/>
        <dbReference type="EC" id="4.2.3.5"/>
    </reaction>
</comment>
<comment type="cofactor">
    <cofactor evidence="1">
        <name>FMNH2</name>
        <dbReference type="ChEBI" id="CHEBI:57618"/>
    </cofactor>
    <text evidence="1">Reduced FMN (FMNH(2)).</text>
</comment>
<comment type="pathway">
    <text evidence="1">Metabolic intermediate biosynthesis; chorismate biosynthesis; chorismate from D-erythrose 4-phosphate and phosphoenolpyruvate: step 7/7.</text>
</comment>
<comment type="subunit">
    <text evidence="1">Homotetramer.</text>
</comment>
<comment type="similarity">
    <text evidence="1">Belongs to the chorismate synthase family.</text>
</comment>
<accession>B6I4X6</accession>
<evidence type="ECO:0000255" key="1">
    <source>
        <dbReference type="HAMAP-Rule" id="MF_00300"/>
    </source>
</evidence>
<keyword id="KW-0028">Amino-acid biosynthesis</keyword>
<keyword id="KW-0057">Aromatic amino acid biosynthesis</keyword>
<keyword id="KW-0274">FAD</keyword>
<keyword id="KW-0285">Flavoprotein</keyword>
<keyword id="KW-0288">FMN</keyword>
<keyword id="KW-0456">Lyase</keyword>
<keyword id="KW-0521">NADP</keyword>
<gene>
    <name evidence="1" type="primary">aroC</name>
    <name type="ordered locus">ECSE_2638</name>
</gene>
<proteinExistence type="inferred from homology"/>
<protein>
    <recommendedName>
        <fullName evidence="1">Chorismate synthase</fullName>
        <shortName evidence="1">CS</shortName>
        <ecNumber evidence="1">4.2.3.5</ecNumber>
    </recommendedName>
    <alternativeName>
        <fullName evidence="1">5-enolpyruvylshikimate-3-phosphate phospholyase</fullName>
    </alternativeName>
</protein>
<feature type="chain" id="PRO_1000115350" description="Chorismate synthase">
    <location>
        <begin position="1"/>
        <end position="361"/>
    </location>
</feature>
<feature type="binding site" evidence="1">
    <location>
        <position position="48"/>
    </location>
    <ligand>
        <name>NADP(+)</name>
        <dbReference type="ChEBI" id="CHEBI:58349"/>
    </ligand>
</feature>
<feature type="binding site" evidence="1">
    <location>
        <position position="54"/>
    </location>
    <ligand>
        <name>NADP(+)</name>
        <dbReference type="ChEBI" id="CHEBI:58349"/>
    </ligand>
</feature>
<feature type="binding site" evidence="1">
    <location>
        <begin position="125"/>
        <end position="127"/>
    </location>
    <ligand>
        <name>FMN</name>
        <dbReference type="ChEBI" id="CHEBI:58210"/>
    </ligand>
</feature>
<feature type="binding site" evidence="1">
    <location>
        <begin position="238"/>
        <end position="239"/>
    </location>
    <ligand>
        <name>FMN</name>
        <dbReference type="ChEBI" id="CHEBI:58210"/>
    </ligand>
</feature>
<feature type="binding site" evidence="1">
    <location>
        <position position="278"/>
    </location>
    <ligand>
        <name>FMN</name>
        <dbReference type="ChEBI" id="CHEBI:58210"/>
    </ligand>
</feature>
<feature type="binding site" evidence="1">
    <location>
        <begin position="293"/>
        <end position="297"/>
    </location>
    <ligand>
        <name>FMN</name>
        <dbReference type="ChEBI" id="CHEBI:58210"/>
    </ligand>
</feature>
<feature type="binding site" evidence="1">
    <location>
        <position position="319"/>
    </location>
    <ligand>
        <name>FMN</name>
        <dbReference type="ChEBI" id="CHEBI:58210"/>
    </ligand>
</feature>
<organism>
    <name type="scientific">Escherichia coli (strain SE11)</name>
    <dbReference type="NCBI Taxonomy" id="409438"/>
    <lineage>
        <taxon>Bacteria</taxon>
        <taxon>Pseudomonadati</taxon>
        <taxon>Pseudomonadota</taxon>
        <taxon>Gammaproteobacteria</taxon>
        <taxon>Enterobacterales</taxon>
        <taxon>Enterobacteriaceae</taxon>
        <taxon>Escherichia</taxon>
    </lineage>
</organism>
<dbReference type="EC" id="4.2.3.5" evidence="1"/>
<dbReference type="EMBL" id="AP009240">
    <property type="protein sequence ID" value="BAG78162.1"/>
    <property type="molecule type" value="Genomic_DNA"/>
</dbReference>
<dbReference type="RefSeq" id="WP_000918470.1">
    <property type="nucleotide sequence ID" value="NC_011415.1"/>
</dbReference>
<dbReference type="SMR" id="B6I4X6"/>
<dbReference type="GeneID" id="93774846"/>
<dbReference type="KEGG" id="ecy:ECSE_2638"/>
<dbReference type="HOGENOM" id="CLU_034547_0_2_6"/>
<dbReference type="UniPathway" id="UPA00053">
    <property type="reaction ID" value="UER00090"/>
</dbReference>
<dbReference type="Proteomes" id="UP000008199">
    <property type="component" value="Chromosome"/>
</dbReference>
<dbReference type="GO" id="GO:0005829">
    <property type="term" value="C:cytosol"/>
    <property type="evidence" value="ECO:0007669"/>
    <property type="project" value="TreeGrafter"/>
</dbReference>
<dbReference type="GO" id="GO:0004107">
    <property type="term" value="F:chorismate synthase activity"/>
    <property type="evidence" value="ECO:0007669"/>
    <property type="project" value="UniProtKB-UniRule"/>
</dbReference>
<dbReference type="GO" id="GO:0010181">
    <property type="term" value="F:FMN binding"/>
    <property type="evidence" value="ECO:0007669"/>
    <property type="project" value="TreeGrafter"/>
</dbReference>
<dbReference type="GO" id="GO:0008652">
    <property type="term" value="P:amino acid biosynthetic process"/>
    <property type="evidence" value="ECO:0007669"/>
    <property type="project" value="UniProtKB-KW"/>
</dbReference>
<dbReference type="GO" id="GO:0009073">
    <property type="term" value="P:aromatic amino acid family biosynthetic process"/>
    <property type="evidence" value="ECO:0007669"/>
    <property type="project" value="UniProtKB-KW"/>
</dbReference>
<dbReference type="GO" id="GO:0009423">
    <property type="term" value="P:chorismate biosynthetic process"/>
    <property type="evidence" value="ECO:0007669"/>
    <property type="project" value="UniProtKB-UniRule"/>
</dbReference>
<dbReference type="CDD" id="cd07304">
    <property type="entry name" value="Chorismate_synthase"/>
    <property type="match status" value="1"/>
</dbReference>
<dbReference type="FunFam" id="3.60.150.10:FF:000001">
    <property type="entry name" value="Chorismate synthase"/>
    <property type="match status" value="1"/>
</dbReference>
<dbReference type="Gene3D" id="3.60.150.10">
    <property type="entry name" value="Chorismate synthase AroC"/>
    <property type="match status" value="1"/>
</dbReference>
<dbReference type="HAMAP" id="MF_00300">
    <property type="entry name" value="Chorismate_synth"/>
    <property type="match status" value="1"/>
</dbReference>
<dbReference type="InterPro" id="IPR000453">
    <property type="entry name" value="Chorismate_synth"/>
</dbReference>
<dbReference type="InterPro" id="IPR035904">
    <property type="entry name" value="Chorismate_synth_AroC_sf"/>
</dbReference>
<dbReference type="InterPro" id="IPR020541">
    <property type="entry name" value="Chorismate_synthase_CS"/>
</dbReference>
<dbReference type="NCBIfam" id="TIGR00033">
    <property type="entry name" value="aroC"/>
    <property type="match status" value="1"/>
</dbReference>
<dbReference type="NCBIfam" id="NF003793">
    <property type="entry name" value="PRK05382.1"/>
    <property type="match status" value="1"/>
</dbReference>
<dbReference type="PANTHER" id="PTHR21085">
    <property type="entry name" value="CHORISMATE SYNTHASE"/>
    <property type="match status" value="1"/>
</dbReference>
<dbReference type="PANTHER" id="PTHR21085:SF0">
    <property type="entry name" value="CHORISMATE SYNTHASE"/>
    <property type="match status" value="1"/>
</dbReference>
<dbReference type="Pfam" id="PF01264">
    <property type="entry name" value="Chorismate_synt"/>
    <property type="match status" value="1"/>
</dbReference>
<dbReference type="PIRSF" id="PIRSF001456">
    <property type="entry name" value="Chorismate_synth"/>
    <property type="match status" value="1"/>
</dbReference>
<dbReference type="SUPFAM" id="SSF103263">
    <property type="entry name" value="Chorismate synthase, AroC"/>
    <property type="match status" value="1"/>
</dbReference>
<dbReference type="PROSITE" id="PS00787">
    <property type="entry name" value="CHORISMATE_SYNTHASE_1"/>
    <property type="match status" value="1"/>
</dbReference>
<dbReference type="PROSITE" id="PS00788">
    <property type="entry name" value="CHORISMATE_SYNTHASE_2"/>
    <property type="match status" value="1"/>
</dbReference>
<dbReference type="PROSITE" id="PS00789">
    <property type="entry name" value="CHORISMATE_SYNTHASE_3"/>
    <property type="match status" value="1"/>
</dbReference>
<name>AROC_ECOSE</name>
<reference key="1">
    <citation type="journal article" date="2008" name="DNA Res.">
        <title>Complete genome sequence and comparative analysis of the wild-type commensal Escherichia coli strain SE11 isolated from a healthy adult.</title>
        <authorList>
            <person name="Oshima K."/>
            <person name="Toh H."/>
            <person name="Ogura Y."/>
            <person name="Sasamoto H."/>
            <person name="Morita H."/>
            <person name="Park S.-H."/>
            <person name="Ooka T."/>
            <person name="Iyoda S."/>
            <person name="Taylor T.D."/>
            <person name="Hayashi T."/>
            <person name="Itoh K."/>
            <person name="Hattori M."/>
        </authorList>
    </citation>
    <scope>NUCLEOTIDE SEQUENCE [LARGE SCALE GENOMIC DNA]</scope>
    <source>
        <strain>SE11</strain>
    </source>
</reference>